<evidence type="ECO:0000250" key="1"/>
<evidence type="ECO:0000305" key="2"/>
<evidence type="ECO:0007829" key="3">
    <source>
        <dbReference type="PDB" id="7Q5Y"/>
    </source>
</evidence>
<name>NUCD2_AQUAE</name>
<organism>
    <name type="scientific">Aquifex aeolicus (strain VF5)</name>
    <dbReference type="NCBI Taxonomy" id="224324"/>
    <lineage>
        <taxon>Bacteria</taxon>
        <taxon>Pseudomonadati</taxon>
        <taxon>Aquificota</taxon>
        <taxon>Aquificia</taxon>
        <taxon>Aquificales</taxon>
        <taxon>Aquificaceae</taxon>
        <taxon>Aquifex</taxon>
    </lineage>
</organism>
<protein>
    <recommendedName>
        <fullName>NADH-quinone oxidoreductase subunit C/D 2</fullName>
        <ecNumber>7.1.1.-</ecNumber>
    </recommendedName>
    <alternativeName>
        <fullName>NADH dehydrogenase I subunit C/D 2</fullName>
    </alternativeName>
    <alternativeName>
        <fullName>NDH-1 subunit C/D 2</fullName>
    </alternativeName>
</protein>
<keyword id="KW-0002">3D-structure</keyword>
<keyword id="KW-0997">Cell inner membrane</keyword>
<keyword id="KW-1003">Cell membrane</keyword>
<keyword id="KW-0472">Membrane</keyword>
<keyword id="KW-0511">Multifunctional enzyme</keyword>
<keyword id="KW-0520">NAD</keyword>
<keyword id="KW-0874">Quinone</keyword>
<keyword id="KW-1185">Reference proteome</keyword>
<keyword id="KW-1278">Translocase</keyword>
<keyword id="KW-0813">Transport</keyword>
<keyword id="KW-0830">Ubiquinone</keyword>
<sequence length="586" mass="67893">MKWVNKGTVERVKQEFKDEVKYYETKHTKGFEVSHDFLKPLLKFLKERERFLHFVDMTCIDFPEHPNRFQGVYILYNPEENERVIVKSWAKDGKLPTVEDLWPGAKWAEREAYDMFGVVFEGHENLRRMFMWEGYEHYPLRKDFPLQGIPEVELPSLTEVLHGRTDPPSHDFELVHTKLPTLEDLERTEKARLKKKAELVLNWGPLHPGTHGTIWFLFDLEGEKVVQSDVILGQLHRGMEKLAENLHYFQFIPYTDRMDYISAICNELAYVETVERLLGVEVPEKARYIRTMFAELQRINSHLLWLGTGALDLGALTVFLYAFREREKIMDIIEGNAGYRLTSCFLRIGGVHYDLAEGTLDVVKHFIKDFPNRLKEYHTLLTRNRIWLRRTKDVGVITREDVHNYGLSGPVARGSGVPYDLRKLQPYAAYDEVEFDIPVGEVGDVYDRYLVRMEEMAQSVRIIEQCVQKLEKLPKDAPYLNKEHPAVIPPKEDVFHDLESMVKSFRVVVHGEDAPPGEVYFAGENPRGELGFFIYSKGGGKPYRTRIRSGALYNLSIFPKLIQGRTIADAIALLGSLDPVVGETDR</sequence>
<gene>
    <name type="primary">nuoC2</name>
    <name type="synonym">nuoCD</name>
    <name type="synonym">nuoD</name>
    <name type="synonym">nuoD2</name>
    <name type="ordered locus">aq_1314</name>
</gene>
<accession>O67335</accession>
<comment type="function">
    <text evidence="1">NDH-1 shuttles electrons from NADH, via FMN and iron-sulfur (Fe-S) centers, to quinones in the respiratory chain. The immediate electron acceptor for the enzyme in this species is believed to be ubiquinone. Couples the redox reaction to proton translocation (for every two electrons transferred, four hydrogen ions are translocated across the cytoplasmic membrane), and thus conserves the redox energy in a proton gradient.</text>
</comment>
<comment type="catalytic activity">
    <reaction>
        <text>a quinone + NADH + 5 H(+)(in) = a quinol + NAD(+) + 4 H(+)(out)</text>
        <dbReference type="Rhea" id="RHEA:57888"/>
        <dbReference type="ChEBI" id="CHEBI:15378"/>
        <dbReference type="ChEBI" id="CHEBI:24646"/>
        <dbReference type="ChEBI" id="CHEBI:57540"/>
        <dbReference type="ChEBI" id="CHEBI:57945"/>
        <dbReference type="ChEBI" id="CHEBI:132124"/>
    </reaction>
</comment>
<comment type="subunit">
    <text evidence="1">NDH-1 is composed of 13 different subunits. Subunits NuoB, CD, E, F, and G constitute the peripheral sector of the complex (By similarity).</text>
</comment>
<comment type="subcellular location">
    <subcellularLocation>
        <location evidence="1">Cell inner membrane</location>
        <topology evidence="1">Peripheral membrane protein</topology>
        <orientation evidence="1">Cytoplasmic side</orientation>
    </subcellularLocation>
</comment>
<comment type="similarity">
    <text evidence="2">In the N-terminal section; belongs to the complex I 30 kDa subunit family.</text>
</comment>
<comment type="similarity">
    <text evidence="2">In the C-terminal section; belongs to the complex I 49 kDa subunit family.</text>
</comment>
<reference key="1">
    <citation type="journal article" date="1998" name="Nature">
        <title>The complete genome of the hyperthermophilic bacterium Aquifex aeolicus.</title>
        <authorList>
            <person name="Deckert G."/>
            <person name="Warren P.V."/>
            <person name="Gaasterland T."/>
            <person name="Young W.G."/>
            <person name="Lenox A.L."/>
            <person name="Graham D.E."/>
            <person name="Overbeek R."/>
            <person name="Snead M.A."/>
            <person name="Keller M."/>
            <person name="Aujay M."/>
            <person name="Huber R."/>
            <person name="Feldman R.A."/>
            <person name="Short J.M."/>
            <person name="Olsen G.J."/>
            <person name="Swanson R.V."/>
        </authorList>
    </citation>
    <scope>NUCLEOTIDE SEQUENCE [LARGE SCALE GENOMIC DNA]</scope>
    <source>
        <strain>VF5</strain>
    </source>
</reference>
<proteinExistence type="evidence at protein level"/>
<dbReference type="EC" id="7.1.1.-"/>
<dbReference type="EMBL" id="AE000657">
    <property type="protein sequence ID" value="AAC07298.1"/>
    <property type="molecule type" value="Genomic_DNA"/>
</dbReference>
<dbReference type="PIR" id="D70413">
    <property type="entry name" value="D70413"/>
</dbReference>
<dbReference type="RefSeq" id="NP_213899.1">
    <property type="nucleotide sequence ID" value="NC_000918.1"/>
</dbReference>
<dbReference type="RefSeq" id="WP_010880837.1">
    <property type="nucleotide sequence ID" value="NC_000918.1"/>
</dbReference>
<dbReference type="PDB" id="7Q5Y">
    <property type="method" value="X-ray"/>
    <property type="resolution" value="2.70 A"/>
    <property type="chains" value="B/H/N/T=1-586"/>
</dbReference>
<dbReference type="PDBsum" id="7Q5Y"/>
<dbReference type="SMR" id="O67335"/>
<dbReference type="FunCoup" id="O67335">
    <property type="interactions" value="305"/>
</dbReference>
<dbReference type="STRING" id="224324.aq_1314"/>
<dbReference type="EnsemblBacteria" id="AAC07298">
    <property type="protein sequence ID" value="AAC07298"/>
    <property type="gene ID" value="aq_1314"/>
</dbReference>
<dbReference type="KEGG" id="aae:aq_1314"/>
<dbReference type="PATRIC" id="fig|224324.8.peg.1023"/>
<dbReference type="eggNOG" id="COG0649">
    <property type="taxonomic scope" value="Bacteria"/>
</dbReference>
<dbReference type="eggNOG" id="COG0852">
    <property type="taxonomic scope" value="Bacteria"/>
</dbReference>
<dbReference type="HOGENOM" id="CLU_015134_3_2_0"/>
<dbReference type="InParanoid" id="O67335"/>
<dbReference type="OrthoDB" id="9801496at2"/>
<dbReference type="Proteomes" id="UP000000798">
    <property type="component" value="Chromosome"/>
</dbReference>
<dbReference type="GO" id="GO:0030964">
    <property type="term" value="C:NADH dehydrogenase complex"/>
    <property type="evidence" value="ECO:0007669"/>
    <property type="project" value="InterPro"/>
</dbReference>
<dbReference type="GO" id="GO:0005886">
    <property type="term" value="C:plasma membrane"/>
    <property type="evidence" value="ECO:0007669"/>
    <property type="project" value="UniProtKB-SubCell"/>
</dbReference>
<dbReference type="GO" id="GO:0051287">
    <property type="term" value="F:NAD binding"/>
    <property type="evidence" value="ECO:0007669"/>
    <property type="project" value="InterPro"/>
</dbReference>
<dbReference type="GO" id="GO:0008137">
    <property type="term" value="F:NADH dehydrogenase (ubiquinone) activity"/>
    <property type="evidence" value="ECO:0007669"/>
    <property type="project" value="InterPro"/>
</dbReference>
<dbReference type="GO" id="GO:0050136">
    <property type="term" value="F:NADH:ubiquinone reductase (non-electrogenic) activity"/>
    <property type="evidence" value="ECO:0007669"/>
    <property type="project" value="UniProtKB-UniRule"/>
</dbReference>
<dbReference type="GO" id="GO:0048038">
    <property type="term" value="F:quinone binding"/>
    <property type="evidence" value="ECO:0007669"/>
    <property type="project" value="UniProtKB-KW"/>
</dbReference>
<dbReference type="Gene3D" id="1.10.645.10">
    <property type="entry name" value="Cytochrome-c3 Hydrogenase, chain B"/>
    <property type="match status" value="1"/>
</dbReference>
<dbReference type="Gene3D" id="3.30.460.80">
    <property type="entry name" value="NADH:ubiquinone oxidoreductase, 30kDa subunit"/>
    <property type="match status" value="1"/>
</dbReference>
<dbReference type="HAMAP" id="MF_01397">
    <property type="entry name" value="NDH1_NuoCD_2"/>
    <property type="match status" value="1"/>
</dbReference>
<dbReference type="HAMAP" id="MF_01358">
    <property type="entry name" value="NDH1_NuoD"/>
    <property type="match status" value="1"/>
</dbReference>
<dbReference type="InterPro" id="IPR001135">
    <property type="entry name" value="NADH_Q_OxRdtase_suD"/>
</dbReference>
<dbReference type="InterPro" id="IPR037232">
    <property type="entry name" value="NADH_quin_OxRdtase_su_C/D-like"/>
</dbReference>
<dbReference type="InterPro" id="IPR001268">
    <property type="entry name" value="NADH_UbQ_OxRdtase_30kDa_su"/>
</dbReference>
<dbReference type="InterPro" id="IPR026662">
    <property type="entry name" value="NDH-1_subunit_CD"/>
</dbReference>
<dbReference type="InterPro" id="IPR022885">
    <property type="entry name" value="NDH1_su_D/H"/>
</dbReference>
<dbReference type="InterPro" id="IPR029014">
    <property type="entry name" value="NiFe-Hase_large"/>
</dbReference>
<dbReference type="NCBIfam" id="TIGR01962">
    <property type="entry name" value="NuoD"/>
    <property type="match status" value="1"/>
</dbReference>
<dbReference type="NCBIfam" id="NF004739">
    <property type="entry name" value="PRK06075.1"/>
    <property type="match status" value="1"/>
</dbReference>
<dbReference type="PANTHER" id="PTHR11993:SF10">
    <property type="entry name" value="NADH DEHYDROGENASE [UBIQUINONE] IRON-SULFUR PROTEIN 2, MITOCHONDRIAL"/>
    <property type="match status" value="1"/>
</dbReference>
<dbReference type="PANTHER" id="PTHR11993">
    <property type="entry name" value="NADH-UBIQUINONE OXIDOREDUCTASE 49 KDA SUBUNIT"/>
    <property type="match status" value="1"/>
</dbReference>
<dbReference type="Pfam" id="PF00329">
    <property type="entry name" value="Complex1_30kDa"/>
    <property type="match status" value="1"/>
</dbReference>
<dbReference type="Pfam" id="PF00346">
    <property type="entry name" value="Complex1_49kDa"/>
    <property type="match status" value="1"/>
</dbReference>
<dbReference type="SUPFAM" id="SSF56762">
    <property type="entry name" value="HydB/Nqo4-like"/>
    <property type="match status" value="1"/>
</dbReference>
<dbReference type="SUPFAM" id="SSF143243">
    <property type="entry name" value="Nqo5-like"/>
    <property type="match status" value="1"/>
</dbReference>
<feature type="chain" id="PRO_0000358614" description="NADH-quinone oxidoreductase subunit C/D 2">
    <location>
        <begin position="1"/>
        <end position="586"/>
    </location>
</feature>
<feature type="region of interest" description="NADH dehydrogenase I subunit C" evidence="1">
    <location>
        <begin position="1"/>
        <end position="173"/>
    </location>
</feature>
<feature type="region of interest" description="NADH dehydrogenase I subunit D" evidence="1">
    <location>
        <begin position="197"/>
        <end position="586"/>
    </location>
</feature>
<feature type="strand" evidence="3">
    <location>
        <begin position="2"/>
        <end position="4"/>
    </location>
</feature>
<feature type="helix" evidence="3">
    <location>
        <begin position="6"/>
        <end position="15"/>
    </location>
</feature>
<feature type="turn" evidence="3">
    <location>
        <begin position="17"/>
        <end position="19"/>
    </location>
</feature>
<feature type="strand" evidence="3">
    <location>
        <begin position="20"/>
        <end position="24"/>
    </location>
</feature>
<feature type="strand" evidence="3">
    <location>
        <begin position="29"/>
        <end position="33"/>
    </location>
</feature>
<feature type="helix" evidence="3">
    <location>
        <begin position="35"/>
        <end position="37"/>
    </location>
</feature>
<feature type="helix" evidence="3">
    <location>
        <begin position="38"/>
        <end position="47"/>
    </location>
</feature>
<feature type="strand" evidence="3">
    <location>
        <begin position="53"/>
        <end position="61"/>
    </location>
</feature>
<feature type="strand" evidence="3">
    <location>
        <begin position="65"/>
        <end position="67"/>
    </location>
</feature>
<feature type="strand" evidence="3">
    <location>
        <begin position="69"/>
        <end position="77"/>
    </location>
</feature>
<feature type="turn" evidence="3">
    <location>
        <begin position="78"/>
        <end position="81"/>
    </location>
</feature>
<feature type="strand" evidence="3">
    <location>
        <begin position="82"/>
        <end position="89"/>
    </location>
</feature>
<feature type="strand" evidence="3">
    <location>
        <begin position="94"/>
        <end position="96"/>
    </location>
</feature>
<feature type="turn" evidence="3">
    <location>
        <begin position="99"/>
        <end position="101"/>
    </location>
</feature>
<feature type="helix" evidence="3">
    <location>
        <begin position="105"/>
        <end position="116"/>
    </location>
</feature>
<feature type="strand" evidence="3">
    <location>
        <begin position="119"/>
        <end position="121"/>
    </location>
</feature>
<feature type="strand" evidence="3">
    <location>
        <begin position="129"/>
        <end position="131"/>
    </location>
</feature>
<feature type="strand" evidence="3">
    <location>
        <begin position="150"/>
        <end position="153"/>
    </location>
</feature>
<feature type="helix" evidence="3">
    <location>
        <begin position="157"/>
        <end position="160"/>
    </location>
</feature>
<feature type="turn" evidence="3">
    <location>
        <begin position="161"/>
        <end position="163"/>
    </location>
</feature>
<feature type="strand" evidence="3">
    <location>
        <begin position="175"/>
        <end position="177"/>
    </location>
</feature>
<feature type="helix" evidence="3">
    <location>
        <begin position="182"/>
        <end position="190"/>
    </location>
</feature>
<feature type="strand" evidence="3">
    <location>
        <begin position="197"/>
        <end position="203"/>
    </location>
</feature>
<feature type="turn" evidence="3">
    <location>
        <begin position="210"/>
        <end position="213"/>
    </location>
</feature>
<feature type="strand" evidence="3">
    <location>
        <begin position="215"/>
        <end position="221"/>
    </location>
</feature>
<feature type="strand" evidence="3">
    <location>
        <begin position="224"/>
        <end position="231"/>
    </location>
</feature>
<feature type="helix" evidence="3">
    <location>
        <begin position="239"/>
        <end position="243"/>
    </location>
</feature>
<feature type="helix" evidence="3">
    <location>
        <begin position="249"/>
        <end position="251"/>
    </location>
</feature>
<feature type="helix" evidence="3">
    <location>
        <begin position="252"/>
        <end position="256"/>
    </location>
</feature>
<feature type="helix" evidence="3">
    <location>
        <begin position="260"/>
        <end position="262"/>
    </location>
</feature>
<feature type="helix" evidence="3">
    <location>
        <begin position="263"/>
        <end position="278"/>
    </location>
</feature>
<feature type="helix" evidence="3">
    <location>
        <begin position="284"/>
        <end position="311"/>
    </location>
</feature>
<feature type="helix" evidence="3">
    <location>
        <begin position="316"/>
        <end position="337"/>
    </location>
</feature>
<feature type="strand" evidence="3">
    <location>
        <begin position="340"/>
        <end position="342"/>
    </location>
</feature>
<feature type="strand" evidence="3">
    <location>
        <begin position="350"/>
        <end position="353"/>
    </location>
</feature>
<feature type="helix" evidence="3">
    <location>
        <begin position="359"/>
        <end position="382"/>
    </location>
</feature>
<feature type="turn" evidence="3">
    <location>
        <begin position="385"/>
        <end position="391"/>
    </location>
</feature>
<feature type="strand" evidence="3">
    <location>
        <begin position="392"/>
        <end position="395"/>
    </location>
</feature>
<feature type="helix" evidence="3">
    <location>
        <begin position="399"/>
        <end position="405"/>
    </location>
</feature>
<feature type="helix" evidence="3">
    <location>
        <begin position="409"/>
        <end position="413"/>
    </location>
</feature>
<feature type="turn" evidence="3">
    <location>
        <begin position="414"/>
        <end position="416"/>
    </location>
</feature>
<feature type="helix" evidence="3">
    <location>
        <begin position="421"/>
        <end position="424"/>
    </location>
</feature>
<feature type="turn" evidence="3">
    <location>
        <begin position="428"/>
        <end position="432"/>
    </location>
</feature>
<feature type="helix" evidence="3">
    <location>
        <begin position="445"/>
        <end position="471"/>
    </location>
</feature>
<feature type="helix" evidence="3">
    <location>
        <begin position="491"/>
        <end position="494"/>
    </location>
</feature>
<feature type="helix" evidence="3">
    <location>
        <begin position="498"/>
        <end position="510"/>
    </location>
</feature>
<feature type="strand" evidence="3">
    <location>
        <begin position="516"/>
        <end position="525"/>
    </location>
</feature>
<feature type="strand" evidence="3">
    <location>
        <begin position="528"/>
        <end position="541"/>
    </location>
</feature>
<feature type="strand" evidence="3">
    <location>
        <begin position="543"/>
        <end position="548"/>
    </location>
</feature>
<feature type="helix" evidence="3">
    <location>
        <begin position="550"/>
        <end position="556"/>
    </location>
</feature>
<feature type="helix" evidence="3">
    <location>
        <begin position="558"/>
        <end position="562"/>
    </location>
</feature>
<feature type="helix" evidence="3">
    <location>
        <begin position="567"/>
        <end position="569"/>
    </location>
</feature>
<feature type="helix" evidence="3">
    <location>
        <begin position="570"/>
        <end position="576"/>
    </location>
</feature>
<feature type="helix" evidence="3">
    <location>
        <begin position="581"/>
        <end position="583"/>
    </location>
</feature>